<reference key="1">
    <citation type="journal article" date="1992" name="Gene">
        <title>Primary structure of a gene-sized DNA encoding calmodulin from the hypotrichous ciliate Stylonychia lemnae.</title>
        <authorList>
            <person name="Gaunitz C."/>
            <person name="Witte H."/>
            <person name="Gaunitz F."/>
        </authorList>
    </citation>
    <scope>NUCLEOTIDE SEQUENCE [GENOMIC DNA]</scope>
</reference>
<name>CALM_STYLE</name>
<dbReference type="EMBL" id="M76407">
    <property type="protein sequence ID" value="AAA29966.1"/>
    <property type="molecule type" value="Genomic_DNA"/>
</dbReference>
<dbReference type="PIR" id="JC1309">
    <property type="entry name" value="JC1309"/>
</dbReference>
<dbReference type="SMR" id="P27166"/>
<dbReference type="OMA" id="ARKMKEC"/>
<dbReference type="OrthoDB" id="26525at2759"/>
<dbReference type="GO" id="GO:0016460">
    <property type="term" value="C:myosin II complex"/>
    <property type="evidence" value="ECO:0007669"/>
    <property type="project" value="TreeGrafter"/>
</dbReference>
<dbReference type="GO" id="GO:0005509">
    <property type="term" value="F:calcium ion binding"/>
    <property type="evidence" value="ECO:0007669"/>
    <property type="project" value="InterPro"/>
</dbReference>
<dbReference type="CDD" id="cd00051">
    <property type="entry name" value="EFh"/>
    <property type="match status" value="2"/>
</dbReference>
<dbReference type="FunFam" id="1.10.238.10:FF:000034">
    <property type="entry name" value="Calmodulin"/>
    <property type="match status" value="1"/>
</dbReference>
<dbReference type="FunFam" id="1.10.238.10:FF:000042">
    <property type="entry name" value="Calmodulin"/>
    <property type="match status" value="1"/>
</dbReference>
<dbReference type="Gene3D" id="1.10.238.10">
    <property type="entry name" value="EF-hand"/>
    <property type="match status" value="3"/>
</dbReference>
<dbReference type="InterPro" id="IPR050230">
    <property type="entry name" value="CALM/Myosin/TropC-like"/>
</dbReference>
<dbReference type="InterPro" id="IPR011992">
    <property type="entry name" value="EF-hand-dom_pair"/>
</dbReference>
<dbReference type="InterPro" id="IPR018247">
    <property type="entry name" value="EF_Hand_1_Ca_BS"/>
</dbReference>
<dbReference type="InterPro" id="IPR002048">
    <property type="entry name" value="EF_hand_dom"/>
</dbReference>
<dbReference type="PANTHER" id="PTHR23048:SF0">
    <property type="entry name" value="CALMODULIN LIKE 3"/>
    <property type="match status" value="1"/>
</dbReference>
<dbReference type="PANTHER" id="PTHR23048">
    <property type="entry name" value="MYOSIN LIGHT CHAIN 1, 3"/>
    <property type="match status" value="1"/>
</dbReference>
<dbReference type="Pfam" id="PF13499">
    <property type="entry name" value="EF-hand_7"/>
    <property type="match status" value="2"/>
</dbReference>
<dbReference type="SMART" id="SM00054">
    <property type="entry name" value="EFh"/>
    <property type="match status" value="4"/>
</dbReference>
<dbReference type="SUPFAM" id="SSF47473">
    <property type="entry name" value="EF-hand"/>
    <property type="match status" value="1"/>
</dbReference>
<dbReference type="PROSITE" id="PS00018">
    <property type="entry name" value="EF_HAND_1"/>
    <property type="match status" value="4"/>
</dbReference>
<dbReference type="PROSITE" id="PS50222">
    <property type="entry name" value="EF_HAND_2"/>
    <property type="match status" value="4"/>
</dbReference>
<comment type="function">
    <text>Calmodulin mediates the control of a large number of enzymes, ion channels and other proteins by Ca(2+). Among the enzymes to be stimulated by the calmodulin-Ca(2+) complex are a number of protein kinases and phosphatases.</text>
</comment>
<comment type="miscellaneous">
    <text>This protein has four functional calcium-binding sites.</text>
</comment>
<comment type="similarity">
    <text evidence="3">Belongs to the calmodulin family.</text>
</comment>
<organism>
    <name type="scientific">Stylonychia lemnae</name>
    <name type="common">Ciliate</name>
    <dbReference type="NCBI Taxonomy" id="5949"/>
    <lineage>
        <taxon>Eukaryota</taxon>
        <taxon>Sar</taxon>
        <taxon>Alveolata</taxon>
        <taxon>Ciliophora</taxon>
        <taxon>Intramacronucleata</taxon>
        <taxon>Spirotrichea</taxon>
        <taxon>Stichotrichia</taxon>
        <taxon>Sporadotrichida</taxon>
        <taxon>Oxytrichidae</taxon>
        <taxon>Stylonychinae</taxon>
        <taxon>Stylonychia</taxon>
    </lineage>
</organism>
<keyword id="KW-0007">Acetylation</keyword>
<keyword id="KW-0106">Calcium</keyword>
<keyword id="KW-0479">Metal-binding</keyword>
<keyword id="KW-0488">Methylation</keyword>
<keyword id="KW-0677">Repeat</keyword>
<proteinExistence type="inferred from homology"/>
<evidence type="ECO:0000250" key="1"/>
<evidence type="ECO:0000255" key="2">
    <source>
        <dbReference type="PROSITE-ProRule" id="PRU00448"/>
    </source>
</evidence>
<evidence type="ECO:0000305" key="3"/>
<accession>P27166</accession>
<protein>
    <recommendedName>
        <fullName>Calmodulin</fullName>
        <shortName>CaM</shortName>
    </recommendedName>
</protein>
<sequence length="149" mass="16766">MADNLTEEQIAEFKEAFSLFDKDGDGTITTKELGTVMRSLGQNPTEAELQDMINEVDADGNGTIDFPEFLSLMARKMKDTDTEEELVEAFKVFDRDGNGLISAAELRHVMTNLGEKLTDEEVDEMIREADVDGDGHINYEEFVRMMMAK</sequence>
<feature type="initiator methionine" description="Removed" evidence="1">
    <location>
        <position position="1"/>
    </location>
</feature>
<feature type="chain" id="PRO_0000198271" description="Calmodulin">
    <location>
        <begin position="2"/>
        <end position="149"/>
    </location>
</feature>
<feature type="domain" description="EF-hand 1" evidence="2">
    <location>
        <begin position="8"/>
        <end position="43"/>
    </location>
</feature>
<feature type="domain" description="EF-hand 2" evidence="2">
    <location>
        <begin position="44"/>
        <end position="79"/>
    </location>
</feature>
<feature type="domain" description="EF-hand 3" evidence="2">
    <location>
        <begin position="81"/>
        <end position="116"/>
    </location>
</feature>
<feature type="domain" description="EF-hand 4" evidence="2">
    <location>
        <begin position="117"/>
        <end position="149"/>
    </location>
</feature>
<feature type="binding site" evidence="2">
    <location>
        <position position="21"/>
    </location>
    <ligand>
        <name>Ca(2+)</name>
        <dbReference type="ChEBI" id="CHEBI:29108"/>
        <label>1</label>
    </ligand>
</feature>
<feature type="binding site" evidence="2">
    <location>
        <position position="23"/>
    </location>
    <ligand>
        <name>Ca(2+)</name>
        <dbReference type="ChEBI" id="CHEBI:29108"/>
        <label>1</label>
    </ligand>
</feature>
<feature type="binding site" evidence="2">
    <location>
        <position position="25"/>
    </location>
    <ligand>
        <name>Ca(2+)</name>
        <dbReference type="ChEBI" id="CHEBI:29108"/>
        <label>1</label>
    </ligand>
</feature>
<feature type="binding site" evidence="2">
    <location>
        <position position="27"/>
    </location>
    <ligand>
        <name>Ca(2+)</name>
        <dbReference type="ChEBI" id="CHEBI:29108"/>
        <label>1</label>
    </ligand>
</feature>
<feature type="binding site" evidence="2">
    <location>
        <position position="32"/>
    </location>
    <ligand>
        <name>Ca(2+)</name>
        <dbReference type="ChEBI" id="CHEBI:29108"/>
        <label>1</label>
    </ligand>
</feature>
<feature type="binding site" evidence="2">
    <location>
        <position position="57"/>
    </location>
    <ligand>
        <name>Ca(2+)</name>
        <dbReference type="ChEBI" id="CHEBI:29108"/>
        <label>2</label>
    </ligand>
</feature>
<feature type="binding site" evidence="2">
    <location>
        <position position="59"/>
    </location>
    <ligand>
        <name>Ca(2+)</name>
        <dbReference type="ChEBI" id="CHEBI:29108"/>
        <label>2</label>
    </ligand>
</feature>
<feature type="binding site" evidence="2">
    <location>
        <position position="61"/>
    </location>
    <ligand>
        <name>Ca(2+)</name>
        <dbReference type="ChEBI" id="CHEBI:29108"/>
        <label>2</label>
    </ligand>
</feature>
<feature type="binding site" evidence="2">
    <location>
        <position position="63"/>
    </location>
    <ligand>
        <name>Ca(2+)</name>
        <dbReference type="ChEBI" id="CHEBI:29108"/>
        <label>2</label>
    </ligand>
</feature>
<feature type="binding site" evidence="2">
    <location>
        <position position="68"/>
    </location>
    <ligand>
        <name>Ca(2+)</name>
        <dbReference type="ChEBI" id="CHEBI:29108"/>
        <label>2</label>
    </ligand>
</feature>
<feature type="binding site" evidence="2">
    <location>
        <position position="94"/>
    </location>
    <ligand>
        <name>Ca(2+)</name>
        <dbReference type="ChEBI" id="CHEBI:29108"/>
        <label>3</label>
    </ligand>
</feature>
<feature type="binding site" evidence="2">
    <location>
        <position position="96"/>
    </location>
    <ligand>
        <name>Ca(2+)</name>
        <dbReference type="ChEBI" id="CHEBI:29108"/>
        <label>3</label>
    </ligand>
</feature>
<feature type="binding site" evidence="2">
    <location>
        <position position="98"/>
    </location>
    <ligand>
        <name>Ca(2+)</name>
        <dbReference type="ChEBI" id="CHEBI:29108"/>
        <label>3</label>
    </ligand>
</feature>
<feature type="binding site" evidence="2">
    <location>
        <position position="105"/>
    </location>
    <ligand>
        <name>Ca(2+)</name>
        <dbReference type="ChEBI" id="CHEBI:29108"/>
        <label>3</label>
    </ligand>
</feature>
<feature type="binding site" evidence="2">
    <location>
        <position position="130"/>
    </location>
    <ligand>
        <name>Ca(2+)</name>
        <dbReference type="ChEBI" id="CHEBI:29108"/>
        <label>4</label>
    </ligand>
</feature>
<feature type="binding site" evidence="2">
    <location>
        <position position="132"/>
    </location>
    <ligand>
        <name>Ca(2+)</name>
        <dbReference type="ChEBI" id="CHEBI:29108"/>
        <label>4</label>
    </ligand>
</feature>
<feature type="binding site" evidence="2">
    <location>
        <position position="134"/>
    </location>
    <ligand>
        <name>Ca(2+)</name>
        <dbReference type="ChEBI" id="CHEBI:29108"/>
        <label>4</label>
    </ligand>
</feature>
<feature type="binding site" evidence="2">
    <location>
        <position position="136"/>
    </location>
    <ligand>
        <name>Ca(2+)</name>
        <dbReference type="ChEBI" id="CHEBI:29108"/>
        <label>4</label>
    </ligand>
</feature>
<feature type="binding site" evidence="2">
    <location>
        <position position="141"/>
    </location>
    <ligand>
        <name>Ca(2+)</name>
        <dbReference type="ChEBI" id="CHEBI:29108"/>
        <label>4</label>
    </ligand>
</feature>
<feature type="modified residue" description="N-acetylalanine" evidence="1">
    <location>
        <position position="2"/>
    </location>
</feature>
<feature type="modified residue" description="N6,N6,N6-trimethyllysine" evidence="1">
    <location>
        <position position="116"/>
    </location>
</feature>